<organism>
    <name type="scientific">Streptomyces griseus subsp. griseus (strain JCM 4626 / CBS 651.72 / NBRC 13350 / KCC S-0626 / ISP 5235)</name>
    <dbReference type="NCBI Taxonomy" id="455632"/>
    <lineage>
        <taxon>Bacteria</taxon>
        <taxon>Bacillati</taxon>
        <taxon>Actinomycetota</taxon>
        <taxon>Actinomycetes</taxon>
        <taxon>Kitasatosporales</taxon>
        <taxon>Streptomycetaceae</taxon>
        <taxon>Streptomyces</taxon>
    </lineage>
</organism>
<feature type="chain" id="PRO_1000139982" description="Phosphoenolpyruvate transferase">
    <location>
        <begin position="1"/>
        <end position="318"/>
    </location>
</feature>
<feature type="binding site" evidence="1">
    <location>
        <position position="50"/>
    </location>
    <ligand>
        <name>7,8-didemethyl-8-hydroxy-5-deazariboflavin</name>
        <dbReference type="ChEBI" id="CHEBI:59904"/>
    </ligand>
</feature>
<evidence type="ECO:0000255" key="1">
    <source>
        <dbReference type="HAMAP-Rule" id="MF_01257"/>
    </source>
</evidence>
<protein>
    <recommendedName>
        <fullName evidence="1">Phosphoenolpyruvate transferase</fullName>
        <ecNumber evidence="1">2.7.8.28</ecNumber>
    </recommendedName>
    <alternativeName>
        <fullName evidence="1">EPPG:FO PEP transferase</fullName>
    </alternativeName>
</protein>
<keyword id="KW-0460">Magnesium</keyword>
<keyword id="KW-0808">Transferase</keyword>
<comment type="function">
    <text evidence="1">Catalyzes the transfer of the phosphoenolpyruvate moiety from enoylpyruvoyl-2-diphospho-5'-guanosine (EPPG) to 7,8-didemethyl-8-hydroxy-5-deazariboflavin (FO) with the formation of dehydro coenzyme F420-0 and GMP.</text>
</comment>
<comment type="catalytic activity">
    <reaction evidence="1">
        <text>enolpyruvoyl-2-diphospho-5'-guanosine + 7,8-didemethyl-8-hydroxy-5-deazariboflavin = dehydro coenzyme F420-0 + GMP + H(+)</text>
        <dbReference type="Rhea" id="RHEA:27510"/>
        <dbReference type="ChEBI" id="CHEBI:15378"/>
        <dbReference type="ChEBI" id="CHEBI:58115"/>
        <dbReference type="ChEBI" id="CHEBI:59904"/>
        <dbReference type="ChEBI" id="CHEBI:143701"/>
        <dbReference type="ChEBI" id="CHEBI:143705"/>
        <dbReference type="EC" id="2.7.8.28"/>
    </reaction>
</comment>
<comment type="cofactor">
    <cofactor evidence="1">
        <name>Mg(2+)</name>
        <dbReference type="ChEBI" id="CHEBI:18420"/>
    </cofactor>
</comment>
<comment type="pathway">
    <text evidence="1">Cofactor biosynthesis; coenzyme F420 biosynthesis.</text>
</comment>
<comment type="subunit">
    <text evidence="1">Homodimer.</text>
</comment>
<comment type="similarity">
    <text evidence="1">Belongs to the CofD family.</text>
</comment>
<sequence length="318" mass="33169">MRIVVLAGGIGGARFLRGLKQAAPDADITVIGNTGDDIHLFGLKVCPDLDTVMYTLGGGINEEQGWGRTDETFQVKEELAAYGVGPGWFGLGDRDFATHIVRTQMLGAGYPLSAVTEALCARWQPGVRLLPMSDDRVETHVAVETDGESKAIHFQEYWVKLRASVEAQAIVPVGAEQAKPAPGVLEAIGSADVIVFPPSNPVVSIGTILAVPGIREAIAEAGVPVVGLSPIVGDAPVRGMADKVLAAVGVESTAAAVARHYGSGLLDGWLVDTVDAGAVEEVEAAGIRCRAVPLMMTDVDATAAMARQALELAEEVRA</sequence>
<gene>
    <name evidence="1" type="primary">fbiA</name>
    <name type="ordered locus">SGR_4501</name>
</gene>
<proteinExistence type="inferred from homology"/>
<name>FBIA_STRGG</name>
<accession>B1VUV4</accession>
<reference key="1">
    <citation type="journal article" date="2008" name="J. Bacteriol.">
        <title>Genome sequence of the streptomycin-producing microorganism Streptomyces griseus IFO 13350.</title>
        <authorList>
            <person name="Ohnishi Y."/>
            <person name="Ishikawa J."/>
            <person name="Hara H."/>
            <person name="Suzuki H."/>
            <person name="Ikenoya M."/>
            <person name="Ikeda H."/>
            <person name="Yamashita A."/>
            <person name="Hattori M."/>
            <person name="Horinouchi S."/>
        </authorList>
    </citation>
    <scope>NUCLEOTIDE SEQUENCE [LARGE SCALE GENOMIC DNA]</scope>
    <source>
        <strain>JCM 4626 / CBS 651.72 / NBRC 13350 / KCC S-0626 / ISP 5235</strain>
    </source>
</reference>
<dbReference type="EC" id="2.7.8.28" evidence="1"/>
<dbReference type="EMBL" id="AP009493">
    <property type="protein sequence ID" value="BAG21330.1"/>
    <property type="molecule type" value="Genomic_DNA"/>
</dbReference>
<dbReference type="SMR" id="B1VUV4"/>
<dbReference type="KEGG" id="sgr:SGR_4501"/>
<dbReference type="eggNOG" id="COG0391">
    <property type="taxonomic scope" value="Bacteria"/>
</dbReference>
<dbReference type="HOGENOM" id="CLU_055795_0_0_11"/>
<dbReference type="UniPathway" id="UPA00071"/>
<dbReference type="Proteomes" id="UP000001685">
    <property type="component" value="Chromosome"/>
</dbReference>
<dbReference type="GO" id="GO:0043743">
    <property type="term" value="F:LPPG:FO 2-phospho-L-lactate transferase activity"/>
    <property type="evidence" value="ECO:0007669"/>
    <property type="project" value="UniProtKB-EC"/>
</dbReference>
<dbReference type="GO" id="GO:0000287">
    <property type="term" value="F:magnesium ion binding"/>
    <property type="evidence" value="ECO:0007669"/>
    <property type="project" value="InterPro"/>
</dbReference>
<dbReference type="GO" id="GO:0052645">
    <property type="term" value="P:F420-0 metabolic process"/>
    <property type="evidence" value="ECO:0007669"/>
    <property type="project" value="UniProtKB-UniRule"/>
</dbReference>
<dbReference type="CDD" id="cd07186">
    <property type="entry name" value="CofD_like"/>
    <property type="match status" value="1"/>
</dbReference>
<dbReference type="FunFam" id="1.10.8.240:FF:000001">
    <property type="entry name" value="2-phospho-L-lactate transferase"/>
    <property type="match status" value="1"/>
</dbReference>
<dbReference type="FunFam" id="3.40.50.10680:FF:000001">
    <property type="entry name" value="2-phospho-L-lactate transferase"/>
    <property type="match status" value="1"/>
</dbReference>
<dbReference type="Gene3D" id="1.10.8.240">
    <property type="entry name" value="CofD-like domain"/>
    <property type="match status" value="1"/>
</dbReference>
<dbReference type="Gene3D" id="3.40.50.10680">
    <property type="entry name" value="CofD-like domains"/>
    <property type="match status" value="1"/>
</dbReference>
<dbReference type="HAMAP" id="MF_01257">
    <property type="entry name" value="CofD"/>
    <property type="match status" value="1"/>
</dbReference>
<dbReference type="InterPro" id="IPR002882">
    <property type="entry name" value="CofD"/>
</dbReference>
<dbReference type="InterPro" id="IPR038136">
    <property type="entry name" value="CofD-like_dom_sf"/>
</dbReference>
<dbReference type="InterPro" id="IPR010115">
    <property type="entry name" value="FbiA/CofD"/>
</dbReference>
<dbReference type="NCBIfam" id="TIGR01819">
    <property type="entry name" value="F420_cofD"/>
    <property type="match status" value="1"/>
</dbReference>
<dbReference type="PANTHER" id="PTHR43007">
    <property type="entry name" value="2-PHOSPHO-L-LACTATE TRANSFERASE"/>
    <property type="match status" value="1"/>
</dbReference>
<dbReference type="PANTHER" id="PTHR43007:SF1">
    <property type="entry name" value="2-PHOSPHO-L-LACTATE TRANSFERASE"/>
    <property type="match status" value="1"/>
</dbReference>
<dbReference type="Pfam" id="PF01933">
    <property type="entry name" value="CofD"/>
    <property type="match status" value="1"/>
</dbReference>
<dbReference type="SUPFAM" id="SSF142338">
    <property type="entry name" value="CofD-like"/>
    <property type="match status" value="1"/>
</dbReference>